<feature type="signal peptide" evidence="2">
    <location>
        <begin position="1"/>
        <end position="23"/>
    </location>
</feature>
<feature type="propeptide" id="PRO_0000045227" evidence="1">
    <location>
        <begin position="24"/>
        <end position="60"/>
    </location>
</feature>
<feature type="chain" id="PRO_0000045228" description="Thermonuclease">
    <location>
        <begin position="61"/>
        <end position="228"/>
    </location>
</feature>
<feature type="region of interest" description="Disordered" evidence="6">
    <location>
        <begin position="58"/>
        <end position="83"/>
    </location>
</feature>
<feature type="compositionally biased region" description="Polar residues" evidence="6">
    <location>
        <begin position="58"/>
        <end position="70"/>
    </location>
</feature>
<feature type="active site" evidence="1">
    <location>
        <position position="114"/>
    </location>
</feature>
<feature type="active site" evidence="1">
    <location>
        <position position="122"/>
    </location>
</feature>
<feature type="active site" evidence="1">
    <location>
        <position position="166"/>
    </location>
</feature>
<feature type="binding site" evidence="3">
    <location>
        <position position="100"/>
    </location>
    <ligand>
        <name>Ca(2+)</name>
        <dbReference type="ChEBI" id="CHEBI:29108"/>
    </ligand>
</feature>
<feature type="binding site" evidence="3">
    <location>
        <position position="119"/>
    </location>
    <ligand>
        <name>Ca(2+)</name>
        <dbReference type="ChEBI" id="CHEBI:29108"/>
    </ligand>
</feature>
<feature type="binding site" evidence="3">
    <location>
        <position position="120"/>
    </location>
    <ligand>
        <name>Ca(2+)</name>
        <dbReference type="ChEBI" id="CHEBI:29108"/>
    </ligand>
</feature>
<feature type="strand" evidence="7">
    <location>
        <begin position="88"/>
        <end position="96"/>
    </location>
</feature>
<feature type="strand" evidence="7">
    <location>
        <begin position="98"/>
        <end position="106"/>
    </location>
</feature>
<feature type="strand" evidence="7">
    <location>
        <begin position="109"/>
        <end position="115"/>
    </location>
</feature>
<feature type="helix" evidence="7">
    <location>
        <begin position="134"/>
        <end position="147"/>
    </location>
</feature>
<feature type="strand" evidence="7">
    <location>
        <begin position="151"/>
        <end position="154"/>
    </location>
</feature>
<feature type="strand" evidence="7">
    <location>
        <begin position="167"/>
        <end position="173"/>
    </location>
</feature>
<feature type="helix" evidence="7">
    <location>
        <begin position="178"/>
        <end position="184"/>
    </location>
</feature>
<feature type="strand" evidence="7">
    <location>
        <begin position="187"/>
        <end position="190"/>
    </location>
</feature>
<feature type="helix" evidence="7">
    <location>
        <begin position="201"/>
        <end position="213"/>
    </location>
</feature>
<feature type="helix" evidence="7">
    <location>
        <begin position="217"/>
        <end position="219"/>
    </location>
</feature>
<gene>
    <name type="primary">nuc</name>
    <name type="ordered locus">SACOL0860</name>
</gene>
<keyword id="KW-0002">3D-structure</keyword>
<keyword id="KW-0106">Calcium</keyword>
<keyword id="KW-0255">Endonuclease</keyword>
<keyword id="KW-0378">Hydrolase</keyword>
<keyword id="KW-0479">Metal-binding</keyword>
<keyword id="KW-0540">Nuclease</keyword>
<keyword id="KW-0964">Secreted</keyword>
<keyword id="KW-0732">Signal</keyword>
<keyword id="KW-0865">Zymogen</keyword>
<name>NUC_STAAC</name>
<comment type="function">
    <text evidence="1">Enzyme that catalyzes the hydrolysis of both DNA and RNA at the 5' position of the phosphodiester bond.</text>
</comment>
<comment type="catalytic activity">
    <reaction evidence="4 5">
        <text>Endonucleolytic cleavage to nucleoside 3'-phosphates and 3'-phosphooligonucleotide end-products.</text>
        <dbReference type="EC" id="3.1.31.1"/>
    </reaction>
</comment>
<comment type="cofactor">
    <cofactor evidence="1">
        <name>Ca(2+)</name>
        <dbReference type="ChEBI" id="CHEBI:29108"/>
    </cofactor>
    <text evidence="1">Binds 1 Ca(2+) ion per subunit.</text>
</comment>
<comment type="subcellular location">
    <subcellularLocation>
        <location evidence="1">Secreted</location>
    </subcellularLocation>
</comment>
<comment type="similarity">
    <text evidence="3">Belongs to the thermonuclease family.</text>
</comment>
<reference key="1">
    <citation type="journal article" date="2005" name="J. Bacteriol.">
        <title>Insights on evolution of virulence and resistance from the complete genome analysis of an early methicillin-resistant Staphylococcus aureus strain and a biofilm-producing methicillin-resistant Staphylococcus epidermidis strain.</title>
        <authorList>
            <person name="Gill S.R."/>
            <person name="Fouts D.E."/>
            <person name="Archer G.L."/>
            <person name="Mongodin E.F."/>
            <person name="DeBoy R.T."/>
            <person name="Ravel J."/>
            <person name="Paulsen I.T."/>
            <person name="Kolonay J.F."/>
            <person name="Brinkac L.M."/>
            <person name="Beanan M.J."/>
            <person name="Dodson R.J."/>
            <person name="Daugherty S.C."/>
            <person name="Madupu R."/>
            <person name="Angiuoli S.V."/>
            <person name="Durkin A.S."/>
            <person name="Haft D.H."/>
            <person name="Vamathevan J.J."/>
            <person name="Khouri H."/>
            <person name="Utterback T.R."/>
            <person name="Lee C."/>
            <person name="Dimitrov G."/>
            <person name="Jiang L."/>
            <person name="Qin H."/>
            <person name="Weidman J."/>
            <person name="Tran K."/>
            <person name="Kang K.H."/>
            <person name="Hance I.R."/>
            <person name="Nelson K.E."/>
            <person name="Fraser C.M."/>
        </authorList>
    </citation>
    <scope>NUCLEOTIDE SEQUENCE [LARGE SCALE GENOMIC DNA]</scope>
    <source>
        <strain>COL</strain>
    </source>
</reference>
<accession>Q5HHM4</accession>
<evidence type="ECO:0000250" key="1"/>
<evidence type="ECO:0000255" key="2"/>
<evidence type="ECO:0000255" key="3">
    <source>
        <dbReference type="PROSITE-ProRule" id="PRU00272"/>
    </source>
</evidence>
<evidence type="ECO:0000255" key="4">
    <source>
        <dbReference type="PROSITE-ProRule" id="PRU10048"/>
    </source>
</evidence>
<evidence type="ECO:0000255" key="5">
    <source>
        <dbReference type="PROSITE-ProRule" id="PRU10049"/>
    </source>
</evidence>
<evidence type="ECO:0000256" key="6">
    <source>
        <dbReference type="SAM" id="MobiDB-lite"/>
    </source>
</evidence>
<evidence type="ECO:0007829" key="7">
    <source>
        <dbReference type="PDB" id="4WRD"/>
    </source>
</evidence>
<organism>
    <name type="scientific">Staphylococcus aureus (strain COL)</name>
    <dbReference type="NCBI Taxonomy" id="93062"/>
    <lineage>
        <taxon>Bacteria</taxon>
        <taxon>Bacillati</taxon>
        <taxon>Bacillota</taxon>
        <taxon>Bacilli</taxon>
        <taxon>Bacillales</taxon>
        <taxon>Staphylococcaceae</taxon>
        <taxon>Staphylococcus</taxon>
    </lineage>
</organism>
<protein>
    <recommendedName>
        <fullName>Thermonuclease</fullName>
        <shortName>TNase</shortName>
        <ecNumber>3.1.31.1</ecNumber>
    </recommendedName>
    <alternativeName>
        <fullName>Micrococcal nuclease</fullName>
    </alternativeName>
    <alternativeName>
        <fullName>Staphylococcal nuclease</fullName>
    </alternativeName>
</protein>
<sequence>MTEYLLSAGICMAIVSILLIGMAISNVSKGQYAKRFFYFATSCLVLTLVVVSSLSSSANASQTDNGVNRSGSEDPTVYSATSTKKLHKEPATLIKAIDGDTVKLMYKGQPMTFRLLLVDTPETKHPKKGVEKYGPEASAFTKKMVENAKKIEVEFDKGQRTDKYGRGLAYIYADGKMVNEALVRQGLAKVAYVYKPNNTHEQLLRKSEAQAKKEKLNIWSEDNADSGQ</sequence>
<proteinExistence type="evidence at protein level"/>
<dbReference type="EC" id="3.1.31.1"/>
<dbReference type="EMBL" id="CP000046">
    <property type="protein sequence ID" value="AAW36415.1"/>
    <property type="molecule type" value="Genomic_DNA"/>
</dbReference>
<dbReference type="RefSeq" id="WP_001548082.1">
    <property type="nucleotide sequence ID" value="NZ_JBGOFO010000005.1"/>
</dbReference>
<dbReference type="PDB" id="4WRD">
    <property type="method" value="X-ray"/>
    <property type="resolution" value="1.65 A"/>
    <property type="chains" value="A=80-228"/>
</dbReference>
<dbReference type="PDB" id="5DAU">
    <property type="method" value="X-ray"/>
    <property type="resolution" value="1.50 A"/>
    <property type="chains" value="A=80-228"/>
</dbReference>
<dbReference type="PDB" id="9CII">
    <property type="method" value="X-ray"/>
    <property type="resolution" value="1.85 A"/>
    <property type="chains" value="A=80-228"/>
</dbReference>
<dbReference type="PDB" id="9CIJ">
    <property type="method" value="X-ray"/>
    <property type="resolution" value="1.90 A"/>
    <property type="chains" value="A=80-228"/>
</dbReference>
<dbReference type="PDB" id="9CIK">
    <property type="method" value="X-ray"/>
    <property type="resolution" value="1.95 A"/>
    <property type="chains" value="A=80-228"/>
</dbReference>
<dbReference type="PDB" id="9CIL">
    <property type="method" value="X-ray"/>
    <property type="resolution" value="2.00 A"/>
    <property type="chains" value="A=80-228"/>
</dbReference>
<dbReference type="PDB" id="9CU9">
    <property type="method" value="X-ray"/>
    <property type="resolution" value="1.90 A"/>
    <property type="chains" value="A=80-228"/>
</dbReference>
<dbReference type="PDBsum" id="4WRD"/>
<dbReference type="PDBsum" id="5DAU"/>
<dbReference type="PDBsum" id="9CII"/>
<dbReference type="PDBsum" id="9CIJ"/>
<dbReference type="PDBsum" id="9CIK"/>
<dbReference type="PDBsum" id="9CIL"/>
<dbReference type="PDBsum" id="9CU9"/>
<dbReference type="BMRB" id="Q5HHM4"/>
<dbReference type="SMR" id="Q5HHM4"/>
<dbReference type="KEGG" id="sac:SACOL0860"/>
<dbReference type="HOGENOM" id="CLU_046484_5_2_9"/>
<dbReference type="EvolutionaryTrace" id="Q5HHM4"/>
<dbReference type="Proteomes" id="UP000000530">
    <property type="component" value="Chromosome"/>
</dbReference>
<dbReference type="GO" id="GO:0005576">
    <property type="term" value="C:extracellular region"/>
    <property type="evidence" value="ECO:0007669"/>
    <property type="project" value="UniProtKB-SubCell"/>
</dbReference>
<dbReference type="GO" id="GO:0016894">
    <property type="term" value="F:endonuclease activity, active with either ribo- or deoxyribonucleic acids and producing 3'-phosphomonoesters"/>
    <property type="evidence" value="ECO:0007669"/>
    <property type="project" value="UniProtKB-EC"/>
</dbReference>
<dbReference type="GO" id="GO:0046872">
    <property type="term" value="F:metal ion binding"/>
    <property type="evidence" value="ECO:0007669"/>
    <property type="project" value="UniProtKB-KW"/>
</dbReference>
<dbReference type="GO" id="GO:0003676">
    <property type="term" value="F:nucleic acid binding"/>
    <property type="evidence" value="ECO:0007669"/>
    <property type="project" value="InterPro"/>
</dbReference>
<dbReference type="CDD" id="cd00175">
    <property type="entry name" value="SNc"/>
    <property type="match status" value="1"/>
</dbReference>
<dbReference type="FunFam" id="2.40.50.90:FF:000025">
    <property type="entry name" value="Thermonuclease"/>
    <property type="match status" value="1"/>
</dbReference>
<dbReference type="Gene3D" id="2.40.50.90">
    <property type="match status" value="1"/>
</dbReference>
<dbReference type="InterPro" id="IPR035437">
    <property type="entry name" value="SNase_OB-fold_sf"/>
</dbReference>
<dbReference type="InterPro" id="IPR016071">
    <property type="entry name" value="Staphylococal_nuclease_OB-fold"/>
</dbReference>
<dbReference type="InterPro" id="IPR002071">
    <property type="entry name" value="Thermonucl_AS"/>
</dbReference>
<dbReference type="PANTHER" id="PTHR12302">
    <property type="entry name" value="EBNA2 BINDING PROTEIN P100"/>
    <property type="match status" value="1"/>
</dbReference>
<dbReference type="PANTHER" id="PTHR12302:SF3">
    <property type="entry name" value="SERINE_THREONINE-PROTEIN KINASE 31"/>
    <property type="match status" value="1"/>
</dbReference>
<dbReference type="Pfam" id="PF00565">
    <property type="entry name" value="SNase"/>
    <property type="match status" value="1"/>
</dbReference>
<dbReference type="SMART" id="SM00318">
    <property type="entry name" value="SNc"/>
    <property type="match status" value="1"/>
</dbReference>
<dbReference type="SUPFAM" id="SSF50199">
    <property type="entry name" value="Staphylococcal nuclease"/>
    <property type="match status" value="1"/>
</dbReference>
<dbReference type="PROSITE" id="PS01123">
    <property type="entry name" value="TNASE_1"/>
    <property type="match status" value="1"/>
</dbReference>
<dbReference type="PROSITE" id="PS01284">
    <property type="entry name" value="TNASE_2"/>
    <property type="match status" value="1"/>
</dbReference>
<dbReference type="PROSITE" id="PS50830">
    <property type="entry name" value="TNASE_3"/>
    <property type="match status" value="1"/>
</dbReference>